<evidence type="ECO:0000255" key="1">
    <source>
        <dbReference type="HAMAP-Rule" id="MF_00701"/>
    </source>
</evidence>
<evidence type="ECO:0000256" key="2">
    <source>
        <dbReference type="SAM" id="MobiDB-lite"/>
    </source>
</evidence>
<sequence>MEPLHARYPFLARSREAVEAAAVDLGEIVATDETVTARALERVESAITDGTVGEPHRRTRVELLSYPVARVLVSLVDVHICTRKYAQAEAEAAYDRFTEEFATTTELKSTQRETLDRTELLGEFDLASAVSDAGDGYRVEVGAYLDLAADQRGDSWRLVNRPLTDGEVRVTAEELNVLLKQAIRHRVTDGLPFTVPDAIADELTAEVEQLEEVLSELELTREIDTVVPELFPPCMKSLLDQVQKGEHLEHHSRFAIATFLVGIGMTTDEIVDLFQVNPGFGEEATRYQVDHIRGDTSPTEYSTPACSTMQSYGDCVNMDDLCEAISHPMGYYEQKLDDTDEEELVDWREDEGEEEADA</sequence>
<reference key="1">
    <citation type="journal article" date="2004" name="Genome Res.">
        <title>Genome sequence of Haloarcula marismortui: a halophilic archaeon from the Dead Sea.</title>
        <authorList>
            <person name="Baliga N.S."/>
            <person name="Bonneau R."/>
            <person name="Facciotti M.T."/>
            <person name="Pan M."/>
            <person name="Glusman G."/>
            <person name="Deutsch E.W."/>
            <person name="Shannon P."/>
            <person name="Chiu Y."/>
            <person name="Weng R.S."/>
            <person name="Gan R.R."/>
            <person name="Hung P."/>
            <person name="Date S.V."/>
            <person name="Marcotte E."/>
            <person name="Hood L."/>
            <person name="Ng W.V."/>
        </authorList>
    </citation>
    <scope>NUCLEOTIDE SEQUENCE [LARGE SCALE GENOMIC DNA]</scope>
    <source>
        <strain>ATCC 43049 / DSM 3752 / JCM 8966 / VKM B-1809</strain>
    </source>
</reference>
<protein>
    <recommendedName>
        <fullName evidence="1">DNA primase large subunit PriL</fullName>
    </recommendedName>
</protein>
<accession>Q5UYQ8</accession>
<name>PRIL_HALMA</name>
<keyword id="KW-0004">4Fe-4S</keyword>
<keyword id="KW-0235">DNA replication</keyword>
<keyword id="KW-0408">Iron</keyword>
<keyword id="KW-0411">Iron-sulfur</keyword>
<keyword id="KW-0479">Metal-binding</keyword>
<keyword id="KW-0639">Primosome</keyword>
<keyword id="KW-1185">Reference proteome</keyword>
<proteinExistence type="inferred from homology"/>
<dbReference type="EMBL" id="AY596297">
    <property type="protein sequence ID" value="AAV47595.1"/>
    <property type="molecule type" value="Genomic_DNA"/>
</dbReference>
<dbReference type="RefSeq" id="WP_011224464.1">
    <property type="nucleotide sequence ID" value="NZ_CP039138.1"/>
</dbReference>
<dbReference type="STRING" id="272569.rrnAC2844"/>
<dbReference type="PaxDb" id="272569-rrnAC2844"/>
<dbReference type="EnsemblBacteria" id="AAV47595">
    <property type="protein sequence ID" value="AAV47595"/>
    <property type="gene ID" value="rrnAC2844"/>
</dbReference>
<dbReference type="GeneID" id="40153692"/>
<dbReference type="KEGG" id="hma:rrnAC2844"/>
<dbReference type="PATRIC" id="fig|272569.17.peg.3415"/>
<dbReference type="eggNOG" id="arCOG03013">
    <property type="taxonomic scope" value="Archaea"/>
</dbReference>
<dbReference type="HOGENOM" id="CLU_052778_0_0_2"/>
<dbReference type="Proteomes" id="UP000001169">
    <property type="component" value="Chromosome I"/>
</dbReference>
<dbReference type="GO" id="GO:1990077">
    <property type="term" value="C:primosome complex"/>
    <property type="evidence" value="ECO:0007669"/>
    <property type="project" value="UniProtKB-KW"/>
</dbReference>
<dbReference type="GO" id="GO:0051539">
    <property type="term" value="F:4 iron, 4 sulfur cluster binding"/>
    <property type="evidence" value="ECO:0007669"/>
    <property type="project" value="UniProtKB-UniRule"/>
</dbReference>
<dbReference type="GO" id="GO:0003899">
    <property type="term" value="F:DNA-directed RNA polymerase activity"/>
    <property type="evidence" value="ECO:0007669"/>
    <property type="project" value="InterPro"/>
</dbReference>
<dbReference type="GO" id="GO:0046872">
    <property type="term" value="F:metal ion binding"/>
    <property type="evidence" value="ECO:0007669"/>
    <property type="project" value="UniProtKB-KW"/>
</dbReference>
<dbReference type="GO" id="GO:0006270">
    <property type="term" value="P:DNA replication initiation"/>
    <property type="evidence" value="ECO:0007669"/>
    <property type="project" value="TreeGrafter"/>
</dbReference>
<dbReference type="GO" id="GO:0006269">
    <property type="term" value="P:DNA replication, synthesis of primer"/>
    <property type="evidence" value="ECO:0007669"/>
    <property type="project" value="UniProtKB-UniRule"/>
</dbReference>
<dbReference type="CDD" id="cd06560">
    <property type="entry name" value="PriL"/>
    <property type="match status" value="1"/>
</dbReference>
<dbReference type="HAMAP" id="MF_00701">
    <property type="entry name" value="DNA_primase_lrg_arc"/>
    <property type="match status" value="1"/>
</dbReference>
<dbReference type="InterPro" id="IPR007238">
    <property type="entry name" value="DNA_primase_lsu_euk/arc"/>
</dbReference>
<dbReference type="InterPro" id="IPR023642">
    <property type="entry name" value="DNA_primase_lsu_PriL"/>
</dbReference>
<dbReference type="NCBIfam" id="NF002590">
    <property type="entry name" value="PRK02249.1-4"/>
    <property type="match status" value="1"/>
</dbReference>
<dbReference type="PANTHER" id="PTHR10537">
    <property type="entry name" value="DNA PRIMASE LARGE SUBUNIT"/>
    <property type="match status" value="1"/>
</dbReference>
<dbReference type="PANTHER" id="PTHR10537:SF3">
    <property type="entry name" value="DNA PRIMASE LARGE SUBUNIT"/>
    <property type="match status" value="1"/>
</dbReference>
<dbReference type="Pfam" id="PF04104">
    <property type="entry name" value="DNA_primase_lrg"/>
    <property type="match status" value="1"/>
</dbReference>
<dbReference type="SUPFAM" id="SSF140914">
    <property type="entry name" value="PriB N-terminal domain-like"/>
    <property type="match status" value="1"/>
</dbReference>
<feature type="chain" id="PRO_0000046778" description="DNA primase large subunit PriL">
    <location>
        <begin position="1"/>
        <end position="358"/>
    </location>
</feature>
<feature type="region of interest" description="Disordered" evidence="2">
    <location>
        <begin position="335"/>
        <end position="358"/>
    </location>
</feature>
<feature type="compositionally biased region" description="Acidic residues" evidence="2">
    <location>
        <begin position="338"/>
        <end position="358"/>
    </location>
</feature>
<feature type="binding site" evidence="1">
    <location>
        <position position="234"/>
    </location>
    <ligand>
        <name>[4Fe-4S] cluster</name>
        <dbReference type="ChEBI" id="CHEBI:49883"/>
    </ligand>
</feature>
<feature type="binding site" evidence="1">
    <location>
        <position position="306"/>
    </location>
    <ligand>
        <name>[4Fe-4S] cluster</name>
        <dbReference type="ChEBI" id="CHEBI:49883"/>
    </ligand>
</feature>
<feature type="binding site" evidence="1">
    <location>
        <position position="315"/>
    </location>
    <ligand>
        <name>[4Fe-4S] cluster</name>
        <dbReference type="ChEBI" id="CHEBI:49883"/>
    </ligand>
</feature>
<feature type="binding site" evidence="1">
    <location>
        <position position="322"/>
    </location>
    <ligand>
        <name>[4Fe-4S] cluster</name>
        <dbReference type="ChEBI" id="CHEBI:49883"/>
    </ligand>
</feature>
<organism>
    <name type="scientific">Haloarcula marismortui (strain ATCC 43049 / DSM 3752 / JCM 8966 / VKM B-1809)</name>
    <name type="common">Halobacterium marismortui</name>
    <dbReference type="NCBI Taxonomy" id="272569"/>
    <lineage>
        <taxon>Archaea</taxon>
        <taxon>Methanobacteriati</taxon>
        <taxon>Methanobacteriota</taxon>
        <taxon>Stenosarchaea group</taxon>
        <taxon>Halobacteria</taxon>
        <taxon>Halobacteriales</taxon>
        <taxon>Haloarculaceae</taxon>
        <taxon>Haloarcula</taxon>
    </lineage>
</organism>
<comment type="function">
    <text evidence="1">Regulatory subunit of DNA primase, an RNA polymerase that catalyzes the synthesis of short RNA molecules used as primers for DNA polymerase during DNA replication. Stabilizes and modulates the activity of the small subunit, increasing the rate of DNA synthesis, and conferring RNA synthesis capability. The DNA polymerase activity may enable DNA primase to also catalyze primer extension after primer synthesis. May also play a role in DNA repair.</text>
</comment>
<comment type="cofactor">
    <cofactor evidence="1">
        <name>[4Fe-4S] cluster</name>
        <dbReference type="ChEBI" id="CHEBI:49883"/>
    </cofactor>
    <text evidence="1">Binds 1 [4Fe-4S] cluster.</text>
</comment>
<comment type="subunit">
    <text evidence="1">Heterodimer of a small subunit (PriS) and a large subunit (PriL).</text>
</comment>
<comment type="similarity">
    <text evidence="1">Belongs to the eukaryotic-type primase large subunit family.</text>
</comment>
<gene>
    <name evidence="1" type="primary">priL</name>
    <name type="synonym">pri2</name>
    <name type="synonym">priB</name>
    <name type="ordered locus">rrnAC2844</name>
</gene>